<keyword id="KW-1185">Reference proteome</keyword>
<sequence length="36" mass="4055">MKAFSPVRSIRKNSLLDHRLGISQSKTPVDDLMSLL</sequence>
<reference key="1">
    <citation type="journal article" date="1993" name="Gene">
        <title>Two distinct cDNA sequences encoding the human helix-loop-helix protein Id2.</title>
        <authorList>
            <person name="Kurabayashi M."/>
            <person name="Jeyaseelan R."/>
            <person name="Kedes L."/>
        </authorList>
    </citation>
    <scope>NUCLEOTIDE SEQUENCE [MRNA]</scope>
    <source>
        <tissue>Heart</tissue>
    </source>
</reference>
<feature type="chain" id="PRO_0000342398" description="Putative DNA-binding protein inhibitor ID-2B">
    <location>
        <begin position="1"/>
        <end position="36"/>
    </location>
</feature>
<organism>
    <name type="scientific">Homo sapiens</name>
    <name type="common">Human</name>
    <dbReference type="NCBI Taxonomy" id="9606"/>
    <lineage>
        <taxon>Eukaryota</taxon>
        <taxon>Metazoa</taxon>
        <taxon>Chordata</taxon>
        <taxon>Craniata</taxon>
        <taxon>Vertebrata</taxon>
        <taxon>Euteleostomi</taxon>
        <taxon>Mammalia</taxon>
        <taxon>Eutheria</taxon>
        <taxon>Euarchontoglires</taxon>
        <taxon>Primates</taxon>
        <taxon>Haplorrhini</taxon>
        <taxon>Catarrhini</taxon>
        <taxon>Hominidae</taxon>
        <taxon>Homo</taxon>
    </lineage>
</organism>
<gene>
    <name type="primary">ID2B</name>
</gene>
<evidence type="ECO:0000305" key="1"/>
<comment type="caution">
    <text evidence="1">Could be the product of a pseudogene. Encoded by an intronless gene, it lacks the basic helix-loop-helix (bHLH) domain found in ID2.</text>
</comment>
<accession>Q14602</accession>
<proteinExistence type="uncertain"/>
<name>ID2B_HUMAN</name>
<protein>
    <recommendedName>
        <fullName>Putative DNA-binding protein inhibitor ID-2B</fullName>
    </recommendedName>
    <alternativeName>
        <fullName>Inhibitor of DNA binding 2B</fullName>
    </alternativeName>
</protein>
<dbReference type="EMBL" id="M96843">
    <property type="protein sequence ID" value="AAA16865.1"/>
    <property type="molecule type" value="mRNA"/>
</dbReference>
<dbReference type="PIR" id="JC2006">
    <property type="entry name" value="JC2006"/>
</dbReference>
<dbReference type="iPTMnet" id="Q14602"/>
<dbReference type="PhosphoSitePlus" id="Q14602"/>
<dbReference type="BioMuta" id="HGNC:30656"/>
<dbReference type="PeptideAtlas" id="Q14602"/>
<dbReference type="AGR" id="HGNC:30656"/>
<dbReference type="GeneCards" id="ID2B"/>
<dbReference type="HGNC" id="HGNC:30656">
    <property type="gene designation" value="ID2B"/>
</dbReference>
<dbReference type="neXtProt" id="NX_Q14602"/>
<dbReference type="InParanoid" id="Q14602"/>
<dbReference type="PAN-GO" id="Q14602">
    <property type="GO annotations" value="1 GO annotation based on evolutionary models"/>
</dbReference>
<dbReference type="Pharos" id="Q14602">
    <property type="development level" value="Tdark"/>
</dbReference>
<dbReference type="Proteomes" id="UP000005640">
    <property type="component" value="Unplaced"/>
</dbReference>